<gene>
    <name type="primary">mt</name>
</gene>
<accession>P52723</accession>
<proteinExistence type="inferred from homology"/>
<sequence length="60" mass="5932">MDPCDCAKTGACNCGATCKCTNCQCTTCKKSCCSCCPSGCSKCASGCVCKGNSCGSSCCQ</sequence>
<organism>
    <name type="scientific">Carassius auratus</name>
    <name type="common">Goldfish</name>
    <dbReference type="NCBI Taxonomy" id="7957"/>
    <lineage>
        <taxon>Eukaryota</taxon>
        <taxon>Metazoa</taxon>
        <taxon>Chordata</taxon>
        <taxon>Craniata</taxon>
        <taxon>Vertebrata</taxon>
        <taxon>Euteleostomi</taxon>
        <taxon>Actinopterygii</taxon>
        <taxon>Neopterygii</taxon>
        <taxon>Teleostei</taxon>
        <taxon>Ostariophysi</taxon>
        <taxon>Cypriniformes</taxon>
        <taxon>Cyprinidae</taxon>
        <taxon>Cyprininae</taxon>
        <taxon>Carassius</taxon>
    </lineage>
</organism>
<dbReference type="EMBL" id="X97271">
    <property type="protein sequence ID" value="CAA65926.1"/>
    <property type="molecule type" value="mRNA"/>
</dbReference>
<dbReference type="EMBL" id="S75039">
    <property type="protein sequence ID" value="AAB32777.1"/>
    <property type="molecule type" value="mRNA"/>
</dbReference>
<dbReference type="PIR" id="JC2419">
    <property type="entry name" value="JC2419"/>
</dbReference>
<dbReference type="SMR" id="P52723"/>
<dbReference type="Proteomes" id="UP000515129">
    <property type="component" value="Unplaced"/>
</dbReference>
<dbReference type="GO" id="GO:0046872">
    <property type="term" value="F:metal ion binding"/>
    <property type="evidence" value="ECO:0007669"/>
    <property type="project" value="UniProtKB-KW"/>
</dbReference>
<dbReference type="FunFam" id="4.10.10.10:FF:000001">
    <property type="entry name" value="Metallothionein"/>
    <property type="match status" value="1"/>
</dbReference>
<dbReference type="Gene3D" id="4.10.10.10">
    <property type="entry name" value="Metallothionein Isoform II"/>
    <property type="match status" value="1"/>
</dbReference>
<dbReference type="InterPro" id="IPR017854">
    <property type="entry name" value="Metalthion_dom_sf"/>
</dbReference>
<dbReference type="InterPro" id="IPR023587">
    <property type="entry name" value="Metalthion_dom_sf_vert"/>
</dbReference>
<dbReference type="InterPro" id="IPR000006">
    <property type="entry name" value="Metalthion_vert"/>
</dbReference>
<dbReference type="InterPro" id="IPR018064">
    <property type="entry name" value="Metalthion_vert_metal_BS"/>
</dbReference>
<dbReference type="PANTHER" id="PTHR23299">
    <property type="entry name" value="METALLOTHIONEIN"/>
    <property type="match status" value="1"/>
</dbReference>
<dbReference type="PANTHER" id="PTHR23299:SF24">
    <property type="entry name" value="METALLOTHIONEIN-1X"/>
    <property type="match status" value="1"/>
</dbReference>
<dbReference type="Pfam" id="PF00131">
    <property type="entry name" value="Metallothio"/>
    <property type="match status" value="1"/>
</dbReference>
<dbReference type="PRINTS" id="PR00860">
    <property type="entry name" value="MTVERTEBRATE"/>
</dbReference>
<dbReference type="SUPFAM" id="SSF57868">
    <property type="entry name" value="Metallothionein"/>
    <property type="match status" value="1"/>
</dbReference>
<dbReference type="PROSITE" id="PS00203">
    <property type="entry name" value="METALLOTHIONEIN_VRT"/>
    <property type="match status" value="1"/>
</dbReference>
<evidence type="ECO:0000250" key="1"/>
<evidence type="ECO:0000250" key="2">
    <source>
        <dbReference type="UniProtKB" id="P02795"/>
    </source>
</evidence>
<evidence type="ECO:0000250" key="3">
    <source>
        <dbReference type="UniProtKB" id="P62339"/>
    </source>
</evidence>
<evidence type="ECO:0000305" key="4"/>
<reference key="1">
    <citation type="submission" date="1996-04" db="EMBL/GenBank/DDBJ databases">
        <title>The use of metallothionein genes for determining the phylogenetic and evolutionary relationship between extant teleosts.</title>
        <authorList>
            <person name="Kille P."/>
            <person name="Olsson P.-E."/>
        </authorList>
    </citation>
    <scope>NUCLEOTIDE SEQUENCE [MRNA]</scope>
    <source>
        <tissue>Brain</tissue>
    </source>
</reference>
<reference key="2">
    <citation type="journal article" date="1994" name="Biochem. Biophys. Res. Commun.">
        <title>PCR-cloning of goldfish and tilapia metallothionein complementary DNAs.</title>
        <authorList>
            <person name="Chan K.M."/>
        </authorList>
    </citation>
    <scope>NUCLEOTIDE SEQUENCE [MRNA]</scope>
    <source>
        <tissue>Liver</tissue>
    </source>
</reference>
<comment type="function">
    <text evidence="1">Metallothioneins have a high content of cysteine residues that bind various heavy metals.</text>
</comment>
<comment type="domain">
    <text>Class I metallothioneins contain 2 metal-binding domains: four divalent ions are chelated within cluster A of the alpha domain and are coordinated via cysteinyl thiolate bridges to 11 cysteine ligands. Cluster B, the corresponding region within the beta domain, can ligate three divalent ions to 9 cysteines.</text>
</comment>
<comment type="similarity">
    <text evidence="4">Belongs to the metallothionein superfamily. Type 1 family.</text>
</comment>
<feature type="chain" id="PRO_0000197270" description="Metallothionein">
    <location>
        <begin position="1"/>
        <end position="60"/>
    </location>
</feature>
<feature type="region of interest" description="Beta">
    <location>
        <begin position="1"/>
        <end position="28"/>
    </location>
</feature>
<feature type="region of interest" description="Alpha">
    <location>
        <begin position="29"/>
        <end position="60"/>
    </location>
</feature>
<feature type="binding site" evidence="2">
    <location>
        <position position="4"/>
    </location>
    <ligand>
        <name>a divalent metal cation</name>
        <dbReference type="ChEBI" id="CHEBI:60240"/>
        <label>1</label>
        <note>in cluster B</note>
    </ligand>
</feature>
<feature type="binding site" evidence="2">
    <location>
        <position position="6"/>
    </location>
    <ligand>
        <name>a divalent metal cation</name>
        <dbReference type="ChEBI" id="CHEBI:60240"/>
        <label>1</label>
        <note>in cluster B</note>
    </ligand>
</feature>
<feature type="binding site" evidence="2">
    <location>
        <position position="6"/>
    </location>
    <ligand>
        <name>a divalent metal cation</name>
        <dbReference type="ChEBI" id="CHEBI:60240"/>
        <label>2</label>
        <note>in cluster B</note>
    </ligand>
</feature>
<feature type="binding site" evidence="2">
    <location>
        <position position="12"/>
    </location>
    <ligand>
        <name>a divalent metal cation</name>
        <dbReference type="ChEBI" id="CHEBI:60240"/>
        <label>2</label>
        <note>in cluster B</note>
    </ligand>
</feature>
<feature type="binding site" evidence="2">
    <location>
        <position position="14"/>
    </location>
    <ligand>
        <name>a divalent metal cation</name>
        <dbReference type="ChEBI" id="CHEBI:60240"/>
        <label>2</label>
        <note>in cluster B</note>
    </ligand>
</feature>
<feature type="binding site" evidence="2">
    <location>
        <position position="14"/>
    </location>
    <ligand>
        <name>a divalent metal cation</name>
        <dbReference type="ChEBI" id="CHEBI:60240"/>
        <label>3</label>
        <note>in cluster B</note>
    </ligand>
</feature>
<feature type="binding site" evidence="2">
    <location>
        <position position="18"/>
    </location>
    <ligand>
        <name>a divalent metal cation</name>
        <dbReference type="ChEBI" id="CHEBI:60240"/>
        <label>3</label>
        <note>in cluster B</note>
    </ligand>
</feature>
<feature type="binding site" evidence="2">
    <location>
        <position position="20"/>
    </location>
    <ligand>
        <name>a divalent metal cation</name>
        <dbReference type="ChEBI" id="CHEBI:60240"/>
        <label>1</label>
        <note>in cluster B</note>
    </ligand>
</feature>
<feature type="binding site" evidence="2">
    <location>
        <position position="23"/>
    </location>
    <ligand>
        <name>a divalent metal cation</name>
        <dbReference type="ChEBI" id="CHEBI:60240"/>
        <label>1</label>
        <note>in cluster B</note>
    </ligand>
</feature>
<feature type="binding site" evidence="2">
    <location>
        <position position="23"/>
    </location>
    <ligand>
        <name>a divalent metal cation</name>
        <dbReference type="ChEBI" id="CHEBI:60240"/>
        <label>3</label>
        <note>in cluster B</note>
    </ligand>
</feature>
<feature type="binding site" evidence="2">
    <location>
        <position position="25"/>
    </location>
    <ligand>
        <name>a divalent metal cation</name>
        <dbReference type="ChEBI" id="CHEBI:60240"/>
        <label>2</label>
        <note>in cluster B</note>
    </ligand>
</feature>
<feature type="binding site" evidence="2">
    <location>
        <position position="28"/>
    </location>
    <ligand>
        <name>a divalent metal cation</name>
        <dbReference type="ChEBI" id="CHEBI:60240"/>
        <label>3</label>
        <note>in cluster B</note>
    </ligand>
</feature>
<feature type="binding site" evidence="2">
    <location>
        <position position="32"/>
    </location>
    <ligand>
        <name>a divalent metal cation</name>
        <dbReference type="ChEBI" id="CHEBI:60240"/>
        <label>4</label>
        <note>in cluster A</note>
    </ligand>
</feature>
<feature type="binding site" evidence="2">
    <location>
        <position position="33"/>
    </location>
    <ligand>
        <name>a divalent metal cation</name>
        <dbReference type="ChEBI" id="CHEBI:60240"/>
        <label>4</label>
        <note>in cluster A</note>
    </ligand>
</feature>
<feature type="binding site" evidence="2">
    <location>
        <position position="33"/>
    </location>
    <ligand>
        <name>a divalent metal cation</name>
        <dbReference type="ChEBI" id="CHEBI:60240"/>
        <label>5</label>
        <note>in cluster A</note>
    </ligand>
</feature>
<feature type="binding site" evidence="2">
    <location>
        <position position="35"/>
    </location>
    <ligand>
        <name>a divalent metal cation</name>
        <dbReference type="ChEBI" id="CHEBI:60240"/>
        <label>5</label>
        <note>in cluster A</note>
    </ligand>
</feature>
<feature type="binding site" evidence="2">
    <location>
        <position position="36"/>
    </location>
    <ligand>
        <name>a divalent metal cation</name>
        <dbReference type="ChEBI" id="CHEBI:60240"/>
        <label>5</label>
        <note>in cluster A</note>
    </ligand>
</feature>
<feature type="binding site" evidence="2">
    <location>
        <position position="36"/>
    </location>
    <ligand>
        <name>a divalent metal cation</name>
        <dbReference type="ChEBI" id="CHEBI:60240"/>
        <label>6</label>
        <note>in cluster A</note>
    </ligand>
</feature>
<feature type="binding site" evidence="2">
    <location>
        <position position="40"/>
    </location>
    <ligand>
        <name>a divalent metal cation</name>
        <dbReference type="ChEBI" id="CHEBI:60240"/>
        <label>6</label>
        <note>in cluster A</note>
    </ligand>
</feature>
<feature type="binding site" evidence="2">
    <location>
        <position position="43"/>
    </location>
    <ligand>
        <name>a divalent metal cation</name>
        <dbReference type="ChEBI" id="CHEBI:60240"/>
        <label>4</label>
        <note>in cluster A</note>
    </ligand>
</feature>
<feature type="binding site" evidence="2">
    <location>
        <position position="43"/>
    </location>
    <ligand>
        <name>a divalent metal cation</name>
        <dbReference type="ChEBI" id="CHEBI:60240"/>
        <label>6</label>
        <note>in cluster A</note>
    </ligand>
</feature>
<feature type="binding site" evidence="2">
    <location>
        <position position="47"/>
    </location>
    <ligand>
        <name>a divalent metal cation</name>
        <dbReference type="ChEBI" id="CHEBI:60240"/>
        <label>4</label>
        <note>in cluster A</note>
    </ligand>
</feature>
<feature type="binding site" evidence="2">
    <location>
        <position position="49"/>
    </location>
    <ligand>
        <name>a divalent metal cation</name>
        <dbReference type="ChEBI" id="CHEBI:60240"/>
        <label>5</label>
        <note>in cluster A</note>
    </ligand>
</feature>
<feature type="binding site" evidence="2">
    <location>
        <position position="49"/>
    </location>
    <ligand>
        <name>a divalent metal cation</name>
        <dbReference type="ChEBI" id="CHEBI:60240"/>
        <label>7</label>
        <note>in cluster A</note>
    </ligand>
</feature>
<feature type="binding site" evidence="3">
    <location>
        <position position="54"/>
    </location>
    <ligand>
        <name>a divalent metal cation</name>
        <dbReference type="ChEBI" id="CHEBI:60240"/>
        <label>7</label>
        <note>in cluster A</note>
    </ligand>
</feature>
<feature type="binding site" evidence="2">
    <location>
        <position position="58"/>
    </location>
    <ligand>
        <name>a divalent metal cation</name>
        <dbReference type="ChEBI" id="CHEBI:60240"/>
        <label>7</label>
        <note>in cluster A</note>
    </ligand>
</feature>
<feature type="binding site" evidence="2">
    <location>
        <position position="59"/>
    </location>
    <ligand>
        <name>a divalent metal cation</name>
        <dbReference type="ChEBI" id="CHEBI:60240"/>
        <label>6</label>
        <note>in cluster A</note>
    </ligand>
</feature>
<feature type="binding site" evidence="2">
    <location>
        <position position="59"/>
    </location>
    <ligand>
        <name>a divalent metal cation</name>
        <dbReference type="ChEBI" id="CHEBI:60240"/>
        <label>7</label>
        <note>in cluster A</note>
    </ligand>
</feature>
<feature type="sequence conflict" description="In Ref. 2; AAB32777." evidence="4" ref="2">
    <original>D</original>
    <variation>E</variation>
    <location>
        <position position="5"/>
    </location>
</feature>
<feature type="sequence conflict" description="In Ref. 2; AAB32777." evidence="4" ref="2">
    <original>S</original>
    <variation>F</variation>
    <location>
        <position position="34"/>
    </location>
</feature>
<feature type="sequence conflict" description="In Ref. 2; AAB32777." evidence="4" ref="2">
    <original>K</original>
    <variation>N</variation>
    <location>
        <position position="50"/>
    </location>
</feature>
<name>MT_CARAU</name>
<protein>
    <recommendedName>
        <fullName>Metallothionein</fullName>
        <shortName>MT</shortName>
    </recommendedName>
</protein>
<keyword id="KW-0479">Metal-binding</keyword>
<keyword id="KW-0480">Metal-thiolate cluster</keyword>
<keyword id="KW-1185">Reference proteome</keyword>